<comment type="function">
    <text evidence="1">The coatomer is a cytosolic protein complex that binds to dilysine motifs and reversibly associates with Golgi non-clathrin-coated vesicles, which further mediate biosynthetic protein transport from the ER, via the Golgi up to the trans Golgi network. Coatomer complex is required for budding from Golgi membranes, and is essential for the retrograde Golgi-to-ER transport of dilysine-tagged proteins (By similarity).</text>
</comment>
<comment type="subunit">
    <text evidence="1">Oligomeric complex that consists of at least the alpha, beta, beta', gamma, delta, epsilon and zeta subunits.</text>
</comment>
<comment type="subcellular location">
    <subcellularLocation>
        <location evidence="1">Cytoplasm</location>
    </subcellularLocation>
    <subcellularLocation>
        <location evidence="1">Golgi apparatus membrane</location>
        <topology evidence="1">Peripheral membrane protein</topology>
        <orientation evidence="1">Cytoplasmic side</orientation>
    </subcellularLocation>
    <subcellularLocation>
        <location evidence="1">Cytoplasmic vesicle</location>
        <location evidence="1">COPI-coated vesicle membrane</location>
        <topology evidence="1">Peripheral membrane protein</topology>
        <orientation evidence="1">Cytoplasmic side</orientation>
    </subcellularLocation>
    <text evidence="1">The coatomer is cytoplasmic or polymerized on the cytoplasmic side of the Golgi, as well as on the vesicles/buds originating from it.</text>
</comment>
<evidence type="ECO:0000250" key="1"/>
<evidence type="ECO:0000256" key="2">
    <source>
        <dbReference type="SAM" id="MobiDB-lite"/>
    </source>
</evidence>
<name>COPA2_ARATH</name>
<feature type="chain" id="PRO_0000285600" description="Coatomer subunit alpha-2">
    <location>
        <begin position="1"/>
        <end position="1218"/>
    </location>
</feature>
<feature type="repeat" description="WD 1">
    <location>
        <begin position="7"/>
        <end position="48"/>
    </location>
</feature>
<feature type="repeat" description="WD 2">
    <location>
        <begin position="49"/>
        <end position="88"/>
    </location>
</feature>
<feature type="repeat" description="WD 3">
    <location>
        <begin position="91"/>
        <end position="132"/>
    </location>
</feature>
<feature type="repeat" description="WD 4">
    <location>
        <begin position="133"/>
        <end position="172"/>
    </location>
</feature>
<feature type="repeat" description="WD 5">
    <location>
        <begin position="202"/>
        <end position="241"/>
    </location>
</feature>
<feature type="repeat" description="WD 6">
    <location>
        <begin position="246"/>
        <end position="285"/>
    </location>
</feature>
<feature type="repeat" description="WD 7">
    <location>
        <begin position="288"/>
        <end position="326"/>
    </location>
</feature>
<feature type="repeat" description="WD 8">
    <location>
        <begin position="363"/>
        <end position="404"/>
    </location>
</feature>
<feature type="region of interest" description="Disordered" evidence="2">
    <location>
        <begin position="826"/>
        <end position="849"/>
    </location>
</feature>
<feature type="compositionally biased region" description="Acidic residues" evidence="2">
    <location>
        <begin position="831"/>
        <end position="843"/>
    </location>
</feature>
<sequence>MLTKFETKSNRVKGLSFHPKRPWILASLHSGVIQLWDYRMGTLIDRFDEHEGPVRGVHFHNSQPLFVSGGDDYKIKVWNYKTHRCLFTLLGHLDYIRTVQFHHENPWIVSASDDQTIRIWNWQSRTCISVLTGHNHYVMCASFHPKEDLVVSASLDQTVRVWDIGALKKKSASPADDLMRFSQMNSDLFGGVDAIVKYVLEGHDRGVNWASFHPTLPLIVSGADDRQVKLWRMNETKAWEVDTLRGHMNNVSSVMFHAKQDIIVSNSEDKSIRVWDATKRTGIQTFRREHDRFWILAVHPEINLLAAGHDNGMIVFKLERERPAFALSGDSLFYAKDRFLRYYEYSTQKDSQVIPIRRPGTPSLNQSPRTLSYSPTENAVLICSDLDGGSYELYIIPKDSVGRSDVVQDAKRGTGGSAVFIARNRFAVLEKSTSQVLVKNLKNEVVKKSSLPIPTDAIFYAGTGNLLCRSEDKVVIFDLQQRLVLGELQTPFVRYVVWSNDMESVALLSKHTIIIASKKLVLQCTLHETIRVKSGAWDDNGVFIYTTLNHIKYCLPNGDSGIIRTLDVPIYITKVSGNTIFCLDRDGKNRAITINATEYIFKLALLRKKYDHVMSMIKNSQLCGQAMIAYLQQKGFPEVALHFVEDERIRFNLALESGNISVAVASATEINEKDHWYRLGVEALRQGNSRIVEFAYQQTKNFERLSFLYLITGNLDKLSKLMKIAEVKNNVMGQFHNALYLGDVKERVKILENAGHLPLAYITASVHGLTDIAERLAIELGDNVPSLPEGKTPSLLMPPSPIMCGGDWPLLRVMKGIFEGGLESANRGAVDEEEEDVEGDWGEGLDKFDVDGMENTDIEAILDGAEAGEEEDDEEGGWGLDLDLPPELDTPKASANARSSTFVTPPQGMPVSQIWSQKSSLAAEQAAAGSFDTAMRLLHRQLGIKNFAPLKSMFLDLFSGSHSYLRAFSSSPVVPLAIERGWSESSSPNVRGPPALVFDFSQLEAKLKSGYKATTAGKLSEALRVFLSILQTIPLVVVESRREVDEVKELVIIVKEYVLGLQLELKRREMKDDPVRQQELAAYFTHCKLQTPHLRLAYFSAMTVCYKSKNMATAAHFARSLLDTNPTIESQARTARQVMQAAERNMTDATTLNYDFRNPFVICGSTYVPIYKGQKDVACPYCTARFVPSQEGNICSVCDLAVIGADASGLLCSASQVR</sequence>
<gene>
    <name type="ordered locus">At2g21390</name>
    <name type="ORF">F3K23.15</name>
</gene>
<keyword id="KW-0963">Cytoplasm</keyword>
<keyword id="KW-0968">Cytoplasmic vesicle</keyword>
<keyword id="KW-0931">ER-Golgi transport</keyword>
<keyword id="KW-0333">Golgi apparatus</keyword>
<keyword id="KW-0472">Membrane</keyword>
<keyword id="KW-0653">Protein transport</keyword>
<keyword id="KW-1185">Reference proteome</keyword>
<keyword id="KW-0677">Repeat</keyword>
<keyword id="KW-0813">Transport</keyword>
<keyword id="KW-0853">WD repeat</keyword>
<protein>
    <recommendedName>
        <fullName>Coatomer subunit alpha-2</fullName>
    </recommendedName>
    <alternativeName>
        <fullName>Alpha-coat protein 2</fullName>
        <shortName>Alpha-COP 2</shortName>
    </alternativeName>
</protein>
<proteinExistence type="evidence at transcript level"/>
<reference key="1">
    <citation type="journal article" date="1999" name="Nature">
        <title>Sequence and analysis of chromosome 2 of the plant Arabidopsis thaliana.</title>
        <authorList>
            <person name="Lin X."/>
            <person name="Kaul S."/>
            <person name="Rounsley S.D."/>
            <person name="Shea T.P."/>
            <person name="Benito M.-I."/>
            <person name="Town C.D."/>
            <person name="Fujii C.Y."/>
            <person name="Mason T.M."/>
            <person name="Bowman C.L."/>
            <person name="Barnstead M.E."/>
            <person name="Feldblyum T.V."/>
            <person name="Buell C.R."/>
            <person name="Ketchum K.A."/>
            <person name="Lee J.J."/>
            <person name="Ronning C.M."/>
            <person name="Koo H.L."/>
            <person name="Moffat K.S."/>
            <person name="Cronin L.A."/>
            <person name="Shen M."/>
            <person name="Pai G."/>
            <person name="Van Aken S."/>
            <person name="Umayam L."/>
            <person name="Tallon L.J."/>
            <person name="Gill J.E."/>
            <person name="Adams M.D."/>
            <person name="Carrera A.J."/>
            <person name="Creasy T.H."/>
            <person name="Goodman H.M."/>
            <person name="Somerville C.R."/>
            <person name="Copenhaver G.P."/>
            <person name="Preuss D."/>
            <person name="Nierman W.C."/>
            <person name="White O."/>
            <person name="Eisen J.A."/>
            <person name="Salzberg S.L."/>
            <person name="Fraser C.M."/>
            <person name="Venter J.C."/>
        </authorList>
    </citation>
    <scope>NUCLEOTIDE SEQUENCE [LARGE SCALE GENOMIC DNA]</scope>
    <source>
        <strain>cv. Columbia</strain>
    </source>
</reference>
<reference key="2">
    <citation type="journal article" date="2017" name="Plant J.">
        <title>Araport11: a complete reannotation of the Arabidopsis thaliana reference genome.</title>
        <authorList>
            <person name="Cheng C.Y."/>
            <person name="Krishnakumar V."/>
            <person name="Chan A.P."/>
            <person name="Thibaud-Nissen F."/>
            <person name="Schobel S."/>
            <person name="Town C.D."/>
        </authorList>
    </citation>
    <scope>GENOME REANNOTATION</scope>
    <source>
        <strain>cv. Columbia</strain>
    </source>
</reference>
<reference key="3">
    <citation type="submission" date="2006-07" db="EMBL/GenBank/DDBJ databases">
        <title>Large-scale analysis of RIKEN Arabidopsis full-length (RAFL) cDNAs.</title>
        <authorList>
            <person name="Totoki Y."/>
            <person name="Seki M."/>
            <person name="Ishida J."/>
            <person name="Nakajima M."/>
            <person name="Enju A."/>
            <person name="Kamiya A."/>
            <person name="Narusaka M."/>
            <person name="Shin-i T."/>
            <person name="Nakagawa M."/>
            <person name="Sakamoto N."/>
            <person name="Oishi K."/>
            <person name="Kohara Y."/>
            <person name="Kobayashi M."/>
            <person name="Toyoda A."/>
            <person name="Sakaki Y."/>
            <person name="Sakurai T."/>
            <person name="Iida K."/>
            <person name="Akiyama K."/>
            <person name="Satou M."/>
            <person name="Toyoda T."/>
            <person name="Konagaya A."/>
            <person name="Carninci P."/>
            <person name="Kawai J."/>
            <person name="Hayashizaki Y."/>
            <person name="Shinozaki K."/>
        </authorList>
    </citation>
    <scope>NUCLEOTIDE SEQUENCE [LARGE SCALE MRNA]</scope>
    <source>
        <strain>cv. Columbia</strain>
    </source>
</reference>
<dbReference type="EMBL" id="AC006841">
    <property type="protein sequence ID" value="AAD23699.1"/>
    <property type="molecule type" value="Genomic_DNA"/>
</dbReference>
<dbReference type="EMBL" id="CP002685">
    <property type="protein sequence ID" value="AEC07173.1"/>
    <property type="molecule type" value="Genomic_DNA"/>
</dbReference>
<dbReference type="EMBL" id="AK228692">
    <property type="protein sequence ID" value="BAF00596.1"/>
    <property type="molecule type" value="mRNA"/>
</dbReference>
<dbReference type="PIR" id="F84600">
    <property type="entry name" value="F84600"/>
</dbReference>
<dbReference type="RefSeq" id="NP_179734.1">
    <property type="nucleotide sequence ID" value="NM_127711.4"/>
</dbReference>
<dbReference type="SMR" id="Q9SJT9"/>
<dbReference type="BioGRID" id="2031">
    <property type="interactions" value="72"/>
</dbReference>
<dbReference type="FunCoup" id="Q9SJT9">
    <property type="interactions" value="4872"/>
</dbReference>
<dbReference type="STRING" id="3702.Q9SJT9"/>
<dbReference type="iPTMnet" id="Q9SJT9"/>
<dbReference type="PaxDb" id="3702-AT2G21390.1"/>
<dbReference type="ProteomicsDB" id="220615"/>
<dbReference type="EnsemblPlants" id="AT2G21390.1">
    <property type="protein sequence ID" value="AT2G21390.1"/>
    <property type="gene ID" value="AT2G21390"/>
</dbReference>
<dbReference type="GeneID" id="816678"/>
<dbReference type="Gramene" id="AT2G21390.1">
    <property type="protein sequence ID" value="AT2G21390.1"/>
    <property type="gene ID" value="AT2G21390"/>
</dbReference>
<dbReference type="KEGG" id="ath:AT2G21390"/>
<dbReference type="Araport" id="AT2G21390"/>
<dbReference type="TAIR" id="AT2G21390"/>
<dbReference type="eggNOG" id="KOG0292">
    <property type="taxonomic scope" value="Eukaryota"/>
</dbReference>
<dbReference type="HOGENOM" id="CLU_007565_1_0_1"/>
<dbReference type="InParanoid" id="Q9SJT9"/>
<dbReference type="OMA" id="ERYWIMA"/>
<dbReference type="OrthoDB" id="10261470at2759"/>
<dbReference type="PhylomeDB" id="Q9SJT9"/>
<dbReference type="CD-CODE" id="4299E36E">
    <property type="entry name" value="Nucleolus"/>
</dbReference>
<dbReference type="PRO" id="PR:Q9SJT9"/>
<dbReference type="Proteomes" id="UP000006548">
    <property type="component" value="Chromosome 2"/>
</dbReference>
<dbReference type="ExpressionAtlas" id="Q9SJT9">
    <property type="expression patterns" value="baseline and differential"/>
</dbReference>
<dbReference type="GO" id="GO:0030126">
    <property type="term" value="C:COPI vesicle coat"/>
    <property type="evidence" value="ECO:0007669"/>
    <property type="project" value="InterPro"/>
</dbReference>
<dbReference type="GO" id="GO:0000139">
    <property type="term" value="C:Golgi membrane"/>
    <property type="evidence" value="ECO:0007669"/>
    <property type="project" value="UniProtKB-SubCell"/>
</dbReference>
<dbReference type="GO" id="GO:0005739">
    <property type="term" value="C:mitochondrion"/>
    <property type="evidence" value="ECO:0007005"/>
    <property type="project" value="TAIR"/>
</dbReference>
<dbReference type="GO" id="GO:0005198">
    <property type="term" value="F:structural molecule activity"/>
    <property type="evidence" value="ECO:0007669"/>
    <property type="project" value="InterPro"/>
</dbReference>
<dbReference type="GO" id="GO:0006888">
    <property type="term" value="P:endoplasmic reticulum to Golgi vesicle-mediated transport"/>
    <property type="evidence" value="ECO:0007669"/>
    <property type="project" value="InterPro"/>
</dbReference>
<dbReference type="GO" id="GO:0006886">
    <property type="term" value="P:intracellular protein transport"/>
    <property type="evidence" value="ECO:0007669"/>
    <property type="project" value="InterPro"/>
</dbReference>
<dbReference type="CDD" id="cd22948">
    <property type="entry name" value="Coatomer_WDAD_alpha"/>
    <property type="match status" value="1"/>
</dbReference>
<dbReference type="CDD" id="cd00200">
    <property type="entry name" value="WD40"/>
    <property type="match status" value="1"/>
</dbReference>
<dbReference type="FunFam" id="1.25.40.470:FF:000002">
    <property type="entry name" value="Coatomer subunit alpha"/>
    <property type="match status" value="1"/>
</dbReference>
<dbReference type="FunFam" id="2.130.10.10:FF:000010">
    <property type="entry name" value="Coatomer subunit alpha"/>
    <property type="match status" value="1"/>
</dbReference>
<dbReference type="Gene3D" id="1.25.40.470">
    <property type="match status" value="1"/>
</dbReference>
<dbReference type="Gene3D" id="2.130.10.10">
    <property type="entry name" value="YVTN repeat-like/Quinoprotein amine dehydrogenase"/>
    <property type="match status" value="1"/>
</dbReference>
<dbReference type="InterPro" id="IPR006692">
    <property type="entry name" value="Beta-prop_COPA/B_2nd"/>
</dbReference>
<dbReference type="InterPro" id="IPR047312">
    <property type="entry name" value="Coatomer_alpha_WD-assoc_reg"/>
</dbReference>
<dbReference type="InterPro" id="IPR016391">
    <property type="entry name" value="Coatomer_asu"/>
</dbReference>
<dbReference type="InterPro" id="IPR010714">
    <property type="entry name" value="Coatomer_asu_C"/>
</dbReference>
<dbReference type="InterPro" id="IPR050844">
    <property type="entry name" value="Coatomer_complex_subunit"/>
</dbReference>
<dbReference type="InterPro" id="IPR020472">
    <property type="entry name" value="G-protein_beta_WD-40_rep"/>
</dbReference>
<dbReference type="InterPro" id="IPR011048">
    <property type="entry name" value="Haem_d1_sf"/>
</dbReference>
<dbReference type="InterPro" id="IPR056176">
    <property type="entry name" value="TPR_COPA_B"/>
</dbReference>
<dbReference type="InterPro" id="IPR015943">
    <property type="entry name" value="WD40/YVTN_repeat-like_dom_sf"/>
</dbReference>
<dbReference type="InterPro" id="IPR019775">
    <property type="entry name" value="WD40_repeat_CS"/>
</dbReference>
<dbReference type="InterPro" id="IPR036322">
    <property type="entry name" value="WD40_repeat_dom_sf"/>
</dbReference>
<dbReference type="InterPro" id="IPR001680">
    <property type="entry name" value="WD40_rpt"/>
</dbReference>
<dbReference type="PANTHER" id="PTHR19876">
    <property type="entry name" value="COATOMER"/>
    <property type="match status" value="1"/>
</dbReference>
<dbReference type="PANTHER" id="PTHR19876:SF29">
    <property type="entry name" value="COATOMER SUBUNIT ALPHA-2"/>
    <property type="match status" value="1"/>
</dbReference>
<dbReference type="Pfam" id="PF04053">
    <property type="entry name" value="B-prop_COPA_B_2nd"/>
    <property type="match status" value="1"/>
</dbReference>
<dbReference type="Pfam" id="PF06957">
    <property type="entry name" value="COPI_C"/>
    <property type="match status" value="1"/>
</dbReference>
<dbReference type="Pfam" id="PF23953">
    <property type="entry name" value="TPR_COPA_B"/>
    <property type="match status" value="1"/>
</dbReference>
<dbReference type="Pfam" id="PF00400">
    <property type="entry name" value="WD40"/>
    <property type="match status" value="6"/>
</dbReference>
<dbReference type="PIRSF" id="PIRSF003354">
    <property type="entry name" value="Coatomer_alpha_subunit"/>
    <property type="match status" value="1"/>
</dbReference>
<dbReference type="PRINTS" id="PR00320">
    <property type="entry name" value="GPROTEINBRPT"/>
</dbReference>
<dbReference type="SMART" id="SM00320">
    <property type="entry name" value="WD40"/>
    <property type="match status" value="7"/>
</dbReference>
<dbReference type="SUPFAM" id="SSF51004">
    <property type="entry name" value="C-terminal (heme d1) domain of cytochrome cd1-nitrite reductase"/>
    <property type="match status" value="1"/>
</dbReference>
<dbReference type="SUPFAM" id="SSF50978">
    <property type="entry name" value="WD40 repeat-like"/>
    <property type="match status" value="1"/>
</dbReference>
<dbReference type="PROSITE" id="PS00678">
    <property type="entry name" value="WD_REPEATS_1"/>
    <property type="match status" value="1"/>
</dbReference>
<dbReference type="PROSITE" id="PS50082">
    <property type="entry name" value="WD_REPEATS_2"/>
    <property type="match status" value="6"/>
</dbReference>
<dbReference type="PROSITE" id="PS50294">
    <property type="entry name" value="WD_REPEATS_REGION"/>
    <property type="match status" value="1"/>
</dbReference>
<accession>Q9SJT9</accession>
<organism>
    <name type="scientific">Arabidopsis thaliana</name>
    <name type="common">Mouse-ear cress</name>
    <dbReference type="NCBI Taxonomy" id="3702"/>
    <lineage>
        <taxon>Eukaryota</taxon>
        <taxon>Viridiplantae</taxon>
        <taxon>Streptophyta</taxon>
        <taxon>Embryophyta</taxon>
        <taxon>Tracheophyta</taxon>
        <taxon>Spermatophyta</taxon>
        <taxon>Magnoliopsida</taxon>
        <taxon>eudicotyledons</taxon>
        <taxon>Gunneridae</taxon>
        <taxon>Pentapetalae</taxon>
        <taxon>rosids</taxon>
        <taxon>malvids</taxon>
        <taxon>Brassicales</taxon>
        <taxon>Brassicaceae</taxon>
        <taxon>Camelineae</taxon>
        <taxon>Arabidopsis</taxon>
    </lineage>
</organism>